<reference key="1">
    <citation type="journal article" date="2000" name="DNA Res.">
        <title>Complete genome structure of the nitrogen-fixing symbiotic bacterium Mesorhizobium loti.</title>
        <authorList>
            <person name="Kaneko T."/>
            <person name="Nakamura Y."/>
            <person name="Sato S."/>
            <person name="Asamizu E."/>
            <person name="Kato T."/>
            <person name="Sasamoto S."/>
            <person name="Watanabe A."/>
            <person name="Idesawa K."/>
            <person name="Ishikawa A."/>
            <person name="Kawashima K."/>
            <person name="Kimura T."/>
            <person name="Kishida Y."/>
            <person name="Kiyokawa C."/>
            <person name="Kohara M."/>
            <person name="Matsumoto M."/>
            <person name="Matsuno A."/>
            <person name="Mochizuki Y."/>
            <person name="Nakayama S."/>
            <person name="Nakazaki N."/>
            <person name="Shimpo S."/>
            <person name="Sugimoto M."/>
            <person name="Takeuchi C."/>
            <person name="Yamada M."/>
            <person name="Tabata S."/>
        </authorList>
    </citation>
    <scope>NUCLEOTIDE SEQUENCE [LARGE SCALE GENOMIC DNA]</scope>
    <source>
        <strain>LMG 29417 / CECT 9101 / MAFF 303099</strain>
    </source>
</reference>
<keyword id="KW-0963">Cytoplasm</keyword>
<keyword id="KW-0274">FAD</keyword>
<keyword id="KW-0285">Flavoprotein</keyword>
<keyword id="KW-0489">Methyltransferase</keyword>
<keyword id="KW-0520">NAD</keyword>
<keyword id="KW-0521">NADP</keyword>
<keyword id="KW-0808">Transferase</keyword>
<keyword id="KW-0819">tRNA processing</keyword>
<proteinExistence type="inferred from homology"/>
<sequence length="472" mass="50648">MSKNPIHIIGGGLAGSEAAWQAAQAGVPVVLHEMRPVRGTDAHKTDGLAELVCSNSFRSDDAENNAVGLLHAEMRLAGSLIMSAGDANQVPAGGALAVDRDGFSDAVTKKLEAHPLISIQREEVSGLPPADWDQAIIATGPLTAPSLARSIAEATGADALAFFDAIAPIIHFDTIDMDTCWFQSRYDKVGPGGTGKDYINCPMDKDQYLAFVQALIDGQKTEFKQWEGTPYFDGCLPIEIMAERGVETLRYGPMKPMGLTNAHNPMVKAYAVVQLRQDNALGTLYNMVGFQTKLKHAEQVRVFRTIPGLENADFARLGGLHRNTYINSPTLLDQSLQLKSRPGLRFAGQITGCEGYVESAAIGLLAGRFAAAERLGQAPSLPPLTTAFGALLNHITGGHIVSDDEPGKRSFQPMNVNFGLFPPVEAVKIEGKRLRGKDKTVAKRHAITSRALGDCRQWLGLPAPTETAEAAE</sequence>
<accession>Q98LE1</accession>
<protein>
    <recommendedName>
        <fullName evidence="1">Methylenetetrahydrofolate--tRNA-(uracil-5-)-methyltransferase TrmFO</fullName>
        <ecNumber evidence="1">2.1.1.74</ecNumber>
    </recommendedName>
    <alternativeName>
        <fullName evidence="1">Folate-dependent tRNA (uracil-5-)-methyltransferase</fullName>
    </alternativeName>
    <alternativeName>
        <fullName evidence="1">Folate-dependent tRNA(M-5-U54)-methyltransferase</fullName>
    </alternativeName>
</protein>
<name>TRMFO_RHILO</name>
<evidence type="ECO:0000255" key="1">
    <source>
        <dbReference type="HAMAP-Rule" id="MF_01037"/>
    </source>
</evidence>
<organism>
    <name type="scientific">Mesorhizobium japonicum (strain LMG 29417 / CECT 9101 / MAFF 303099)</name>
    <name type="common">Mesorhizobium loti (strain MAFF 303099)</name>
    <dbReference type="NCBI Taxonomy" id="266835"/>
    <lineage>
        <taxon>Bacteria</taxon>
        <taxon>Pseudomonadati</taxon>
        <taxon>Pseudomonadota</taxon>
        <taxon>Alphaproteobacteria</taxon>
        <taxon>Hyphomicrobiales</taxon>
        <taxon>Phyllobacteriaceae</taxon>
        <taxon>Mesorhizobium</taxon>
    </lineage>
</organism>
<feature type="chain" id="PRO_0000117254" description="Methylenetetrahydrofolate--tRNA-(uracil-5-)-methyltransferase TrmFO">
    <location>
        <begin position="1"/>
        <end position="472"/>
    </location>
</feature>
<feature type="binding site" evidence="1">
    <location>
        <begin position="10"/>
        <end position="15"/>
    </location>
    <ligand>
        <name>FAD</name>
        <dbReference type="ChEBI" id="CHEBI:57692"/>
    </ligand>
</feature>
<comment type="function">
    <text evidence="1">Catalyzes the folate-dependent formation of 5-methyl-uridine at position 54 (M-5-U54) in all tRNAs.</text>
</comment>
<comment type="catalytic activity">
    <reaction evidence="1">
        <text>uridine(54) in tRNA + (6R)-5,10-methylene-5,6,7,8-tetrahydrofolate + NADH + H(+) = 5-methyluridine(54) in tRNA + (6S)-5,6,7,8-tetrahydrofolate + NAD(+)</text>
        <dbReference type="Rhea" id="RHEA:16873"/>
        <dbReference type="Rhea" id="RHEA-COMP:10167"/>
        <dbReference type="Rhea" id="RHEA-COMP:10193"/>
        <dbReference type="ChEBI" id="CHEBI:15378"/>
        <dbReference type="ChEBI" id="CHEBI:15636"/>
        <dbReference type="ChEBI" id="CHEBI:57453"/>
        <dbReference type="ChEBI" id="CHEBI:57540"/>
        <dbReference type="ChEBI" id="CHEBI:57945"/>
        <dbReference type="ChEBI" id="CHEBI:65315"/>
        <dbReference type="ChEBI" id="CHEBI:74447"/>
        <dbReference type="EC" id="2.1.1.74"/>
    </reaction>
</comment>
<comment type="catalytic activity">
    <reaction evidence="1">
        <text>uridine(54) in tRNA + (6R)-5,10-methylene-5,6,7,8-tetrahydrofolate + NADPH + H(+) = 5-methyluridine(54) in tRNA + (6S)-5,6,7,8-tetrahydrofolate + NADP(+)</text>
        <dbReference type="Rhea" id="RHEA:62372"/>
        <dbReference type="Rhea" id="RHEA-COMP:10167"/>
        <dbReference type="Rhea" id="RHEA-COMP:10193"/>
        <dbReference type="ChEBI" id="CHEBI:15378"/>
        <dbReference type="ChEBI" id="CHEBI:15636"/>
        <dbReference type="ChEBI" id="CHEBI:57453"/>
        <dbReference type="ChEBI" id="CHEBI:57783"/>
        <dbReference type="ChEBI" id="CHEBI:58349"/>
        <dbReference type="ChEBI" id="CHEBI:65315"/>
        <dbReference type="ChEBI" id="CHEBI:74447"/>
        <dbReference type="EC" id="2.1.1.74"/>
    </reaction>
</comment>
<comment type="cofactor">
    <cofactor evidence="1">
        <name>FAD</name>
        <dbReference type="ChEBI" id="CHEBI:57692"/>
    </cofactor>
</comment>
<comment type="subcellular location">
    <subcellularLocation>
        <location evidence="1">Cytoplasm</location>
    </subcellularLocation>
</comment>
<comment type="similarity">
    <text evidence="1">Belongs to the MnmG family. TrmFO subfamily.</text>
</comment>
<gene>
    <name evidence="1" type="primary">trmFO</name>
    <name type="synonym">gid</name>
    <name type="ordered locus">mlr1064</name>
</gene>
<dbReference type="EC" id="2.1.1.74" evidence="1"/>
<dbReference type="EMBL" id="BA000012">
    <property type="protein sequence ID" value="BAB48522.1"/>
    <property type="molecule type" value="Genomic_DNA"/>
</dbReference>
<dbReference type="RefSeq" id="WP_010909876.1">
    <property type="nucleotide sequence ID" value="NC_002678.2"/>
</dbReference>
<dbReference type="SMR" id="Q98LE1"/>
<dbReference type="KEGG" id="mlo:mlr1064"/>
<dbReference type="PATRIC" id="fig|266835.9.peg.860"/>
<dbReference type="eggNOG" id="COG1206">
    <property type="taxonomic scope" value="Bacteria"/>
</dbReference>
<dbReference type="HOGENOM" id="CLU_033057_1_0_5"/>
<dbReference type="Proteomes" id="UP000000552">
    <property type="component" value="Chromosome"/>
</dbReference>
<dbReference type="GO" id="GO:0005829">
    <property type="term" value="C:cytosol"/>
    <property type="evidence" value="ECO:0007669"/>
    <property type="project" value="TreeGrafter"/>
</dbReference>
<dbReference type="GO" id="GO:0050660">
    <property type="term" value="F:flavin adenine dinucleotide binding"/>
    <property type="evidence" value="ECO:0007669"/>
    <property type="project" value="UniProtKB-UniRule"/>
</dbReference>
<dbReference type="GO" id="GO:0047151">
    <property type="term" value="F:tRNA (uracil(54)-C5)-methyltransferase activity, 5,10-methylenetetrahydrofolate-dependent"/>
    <property type="evidence" value="ECO:0007669"/>
    <property type="project" value="UniProtKB-UniRule"/>
</dbReference>
<dbReference type="GO" id="GO:0030488">
    <property type="term" value="P:tRNA methylation"/>
    <property type="evidence" value="ECO:0007669"/>
    <property type="project" value="TreeGrafter"/>
</dbReference>
<dbReference type="GO" id="GO:0002098">
    <property type="term" value="P:tRNA wobble uridine modification"/>
    <property type="evidence" value="ECO:0007669"/>
    <property type="project" value="TreeGrafter"/>
</dbReference>
<dbReference type="Gene3D" id="3.50.50.60">
    <property type="entry name" value="FAD/NAD(P)-binding domain"/>
    <property type="match status" value="2"/>
</dbReference>
<dbReference type="HAMAP" id="MF_01037">
    <property type="entry name" value="TrmFO"/>
    <property type="match status" value="1"/>
</dbReference>
<dbReference type="InterPro" id="IPR036188">
    <property type="entry name" value="FAD/NAD-bd_sf"/>
</dbReference>
<dbReference type="InterPro" id="IPR002218">
    <property type="entry name" value="MnmG-rel"/>
</dbReference>
<dbReference type="InterPro" id="IPR020595">
    <property type="entry name" value="MnmG-rel_CS"/>
</dbReference>
<dbReference type="InterPro" id="IPR040131">
    <property type="entry name" value="MnmG_N"/>
</dbReference>
<dbReference type="InterPro" id="IPR004417">
    <property type="entry name" value="TrmFO"/>
</dbReference>
<dbReference type="NCBIfam" id="TIGR00137">
    <property type="entry name" value="gid_trmFO"/>
    <property type="match status" value="1"/>
</dbReference>
<dbReference type="NCBIfam" id="NF003739">
    <property type="entry name" value="PRK05335.1"/>
    <property type="match status" value="1"/>
</dbReference>
<dbReference type="PANTHER" id="PTHR11806">
    <property type="entry name" value="GLUCOSE INHIBITED DIVISION PROTEIN A"/>
    <property type="match status" value="1"/>
</dbReference>
<dbReference type="PANTHER" id="PTHR11806:SF2">
    <property type="entry name" value="METHYLENETETRAHYDROFOLATE--TRNA-(URACIL-5-)-METHYLTRANSFERASE TRMFO"/>
    <property type="match status" value="1"/>
</dbReference>
<dbReference type="Pfam" id="PF01134">
    <property type="entry name" value="GIDA"/>
    <property type="match status" value="1"/>
</dbReference>
<dbReference type="SUPFAM" id="SSF51905">
    <property type="entry name" value="FAD/NAD(P)-binding domain"/>
    <property type="match status" value="1"/>
</dbReference>
<dbReference type="PROSITE" id="PS01281">
    <property type="entry name" value="GIDA_2"/>
    <property type="match status" value="1"/>
</dbReference>